<evidence type="ECO:0000255" key="1">
    <source>
        <dbReference type="HAMAP-Rule" id="MF_01551"/>
    </source>
</evidence>
<comment type="function">
    <text evidence="1">Catalyzes the 2'-O-methylation at nucleotide C2498 in 23S rRNA.</text>
</comment>
<comment type="catalytic activity">
    <reaction evidence="1">
        <text>cytidine(2498) in 23S rRNA + S-adenosyl-L-methionine = 2'-O-methylcytidine(2498) in 23S rRNA + S-adenosyl-L-homocysteine + H(+)</text>
        <dbReference type="Rhea" id="RHEA:42788"/>
        <dbReference type="Rhea" id="RHEA-COMP:10244"/>
        <dbReference type="Rhea" id="RHEA-COMP:10245"/>
        <dbReference type="ChEBI" id="CHEBI:15378"/>
        <dbReference type="ChEBI" id="CHEBI:57856"/>
        <dbReference type="ChEBI" id="CHEBI:59789"/>
        <dbReference type="ChEBI" id="CHEBI:74495"/>
        <dbReference type="ChEBI" id="CHEBI:82748"/>
        <dbReference type="EC" id="2.1.1.186"/>
    </reaction>
</comment>
<comment type="subunit">
    <text evidence="1">Monomer.</text>
</comment>
<comment type="subcellular location">
    <subcellularLocation>
        <location evidence="1">Cytoplasm</location>
    </subcellularLocation>
</comment>
<comment type="similarity">
    <text evidence="1">Belongs to the class I-like SAM-binding methyltransferase superfamily. RNA methyltransferase RlmE family. RlmM subfamily.</text>
</comment>
<keyword id="KW-0963">Cytoplasm</keyword>
<keyword id="KW-0489">Methyltransferase</keyword>
<keyword id="KW-1185">Reference proteome</keyword>
<keyword id="KW-0698">rRNA processing</keyword>
<keyword id="KW-0949">S-adenosyl-L-methionine</keyword>
<keyword id="KW-0808">Transferase</keyword>
<protein>
    <recommendedName>
        <fullName evidence="1">Ribosomal RNA large subunit methyltransferase M</fullName>
        <ecNumber evidence="1">2.1.1.186</ecNumber>
    </recommendedName>
    <alternativeName>
        <fullName evidence="1">23S rRNA (cytidine2498-2'-O)-methyltransferase</fullName>
    </alternativeName>
    <alternativeName>
        <fullName evidence="1">23S rRNA 2'-O-ribose methyltransferase RlmM</fullName>
    </alternativeName>
</protein>
<proteinExistence type="inferred from homology"/>
<accession>B4F2E7</accession>
<sequence>MNKVALYCRPGFEKECAAEITDKAGQIGVYGFSRVKEGSGYVIFECYQEGDADKIARDVDFRGLIFARQLFVCGELLKNLPPEDRITPIIDQLKGSTEKAGELRVEVADTNESKELLKFCRKFTVPLRNQLRKEKILLKVENYSRPVIHVFFIAPGCCYVGYSYSFNNSPFYMGIPRLKFPADAPSRSTLKLEEAFHVFIPYEEWEERLASGMSAVDLGACPGGWTYQLVKRSMMVHAVDNGPMAPSLMETGQVRHHQADGFKFEPTSKNITWLVCDMVEKPAKVAALMTTWIVNEWCREAIFNLKLPMKKRYEEVAHILDKIRAELAEKGINAKIQAKHLYHDREEITVHIQNIWAAYRPDREF</sequence>
<feature type="chain" id="PRO_1000201522" description="Ribosomal RNA large subunit methyltransferase M">
    <location>
        <begin position="1"/>
        <end position="365"/>
    </location>
</feature>
<feature type="active site" description="Proton acceptor" evidence="1">
    <location>
        <position position="306"/>
    </location>
</feature>
<feature type="binding site" evidence="1">
    <location>
        <position position="188"/>
    </location>
    <ligand>
        <name>S-adenosyl-L-methionine</name>
        <dbReference type="ChEBI" id="CHEBI:59789"/>
    </ligand>
</feature>
<feature type="binding site" evidence="1">
    <location>
        <begin position="221"/>
        <end position="224"/>
    </location>
    <ligand>
        <name>S-adenosyl-L-methionine</name>
        <dbReference type="ChEBI" id="CHEBI:59789"/>
    </ligand>
</feature>
<feature type="binding site" evidence="1">
    <location>
        <position position="240"/>
    </location>
    <ligand>
        <name>S-adenosyl-L-methionine</name>
        <dbReference type="ChEBI" id="CHEBI:59789"/>
    </ligand>
</feature>
<feature type="binding site" evidence="1">
    <location>
        <position position="260"/>
    </location>
    <ligand>
        <name>S-adenosyl-L-methionine</name>
        <dbReference type="ChEBI" id="CHEBI:59789"/>
    </ligand>
</feature>
<feature type="binding site" evidence="1">
    <location>
        <position position="277"/>
    </location>
    <ligand>
        <name>S-adenosyl-L-methionine</name>
        <dbReference type="ChEBI" id="CHEBI:59789"/>
    </ligand>
</feature>
<gene>
    <name evidence="1" type="primary">rlmM</name>
    <name type="ordered locus">PMI2299</name>
</gene>
<name>RLMM_PROMH</name>
<reference key="1">
    <citation type="journal article" date="2008" name="J. Bacteriol.">
        <title>Complete genome sequence of uropathogenic Proteus mirabilis, a master of both adherence and motility.</title>
        <authorList>
            <person name="Pearson M.M."/>
            <person name="Sebaihia M."/>
            <person name="Churcher C."/>
            <person name="Quail M.A."/>
            <person name="Seshasayee A.S."/>
            <person name="Luscombe N.M."/>
            <person name="Abdellah Z."/>
            <person name="Arrosmith C."/>
            <person name="Atkin B."/>
            <person name="Chillingworth T."/>
            <person name="Hauser H."/>
            <person name="Jagels K."/>
            <person name="Moule S."/>
            <person name="Mungall K."/>
            <person name="Norbertczak H."/>
            <person name="Rabbinowitsch E."/>
            <person name="Walker D."/>
            <person name="Whithead S."/>
            <person name="Thomson N.R."/>
            <person name="Rather P.N."/>
            <person name="Parkhill J."/>
            <person name="Mobley H.L.T."/>
        </authorList>
    </citation>
    <scope>NUCLEOTIDE SEQUENCE [LARGE SCALE GENOMIC DNA]</scope>
    <source>
        <strain>HI4320</strain>
    </source>
</reference>
<dbReference type="EC" id="2.1.1.186" evidence="1"/>
<dbReference type="EMBL" id="AM942759">
    <property type="protein sequence ID" value="CAR44546.1"/>
    <property type="molecule type" value="Genomic_DNA"/>
</dbReference>
<dbReference type="RefSeq" id="WP_004245495.1">
    <property type="nucleotide sequence ID" value="NC_010554.1"/>
</dbReference>
<dbReference type="SMR" id="B4F2E7"/>
<dbReference type="EnsemblBacteria" id="CAR44546">
    <property type="protein sequence ID" value="CAR44546"/>
    <property type="gene ID" value="PMI2299"/>
</dbReference>
<dbReference type="GeneID" id="6801775"/>
<dbReference type="KEGG" id="pmr:PMI2299"/>
<dbReference type="eggNOG" id="COG2933">
    <property type="taxonomic scope" value="Bacteria"/>
</dbReference>
<dbReference type="HOGENOM" id="CLU_043780_0_0_6"/>
<dbReference type="Proteomes" id="UP000008319">
    <property type="component" value="Chromosome"/>
</dbReference>
<dbReference type="GO" id="GO:0005737">
    <property type="term" value="C:cytoplasm"/>
    <property type="evidence" value="ECO:0007669"/>
    <property type="project" value="UniProtKB-SubCell"/>
</dbReference>
<dbReference type="GO" id="GO:0008757">
    <property type="term" value="F:S-adenosylmethionine-dependent methyltransferase activity"/>
    <property type="evidence" value="ECO:0007669"/>
    <property type="project" value="UniProtKB-UniRule"/>
</dbReference>
<dbReference type="GO" id="GO:0032259">
    <property type="term" value="P:methylation"/>
    <property type="evidence" value="ECO:0007669"/>
    <property type="project" value="UniProtKB-KW"/>
</dbReference>
<dbReference type="GO" id="GO:0006364">
    <property type="term" value="P:rRNA processing"/>
    <property type="evidence" value="ECO:0007669"/>
    <property type="project" value="UniProtKB-UniRule"/>
</dbReference>
<dbReference type="Gene3D" id="3.30.2300.20">
    <property type="match status" value="1"/>
</dbReference>
<dbReference type="Gene3D" id="3.30.70.2810">
    <property type="match status" value="1"/>
</dbReference>
<dbReference type="Gene3D" id="3.40.50.150">
    <property type="entry name" value="Vaccinia Virus protein VP39"/>
    <property type="match status" value="1"/>
</dbReference>
<dbReference type="HAMAP" id="MF_01551">
    <property type="entry name" value="23SrRNA_methyltr_M"/>
    <property type="match status" value="1"/>
</dbReference>
<dbReference type="InterPro" id="IPR040739">
    <property type="entry name" value="RlmM_FDX"/>
</dbReference>
<dbReference type="InterPro" id="IPR048646">
    <property type="entry name" value="RlmM_THUMP-like"/>
</dbReference>
<dbReference type="InterPro" id="IPR002877">
    <property type="entry name" value="RNA_MeTrfase_FtsJ_dom"/>
</dbReference>
<dbReference type="InterPro" id="IPR011224">
    <property type="entry name" value="rRNA_MeTrfase_M"/>
</dbReference>
<dbReference type="InterPro" id="IPR029063">
    <property type="entry name" value="SAM-dependent_MTases_sf"/>
</dbReference>
<dbReference type="NCBIfam" id="NF008734">
    <property type="entry name" value="PRK11760.1"/>
    <property type="match status" value="1"/>
</dbReference>
<dbReference type="PANTHER" id="PTHR37524">
    <property type="entry name" value="RIBOSOMAL RNA LARGE SUBUNIT METHYLTRANSFERASE M"/>
    <property type="match status" value="1"/>
</dbReference>
<dbReference type="PANTHER" id="PTHR37524:SF2">
    <property type="entry name" value="RIBOSOMAL RNA METHYLTRANSFERASE FTSJ DOMAIN-CONTAINING PROTEIN"/>
    <property type="match status" value="1"/>
</dbReference>
<dbReference type="Pfam" id="PF01728">
    <property type="entry name" value="FtsJ"/>
    <property type="match status" value="1"/>
</dbReference>
<dbReference type="Pfam" id="PF18125">
    <property type="entry name" value="RlmM_FDX"/>
    <property type="match status" value="1"/>
</dbReference>
<dbReference type="Pfam" id="PF21239">
    <property type="entry name" value="RLMM_N"/>
    <property type="match status" value="1"/>
</dbReference>
<dbReference type="PIRSF" id="PIRSF028774">
    <property type="entry name" value="UCP028774"/>
    <property type="match status" value="1"/>
</dbReference>
<dbReference type="SUPFAM" id="SSF53335">
    <property type="entry name" value="S-adenosyl-L-methionine-dependent methyltransferases"/>
    <property type="match status" value="1"/>
</dbReference>
<organism>
    <name type="scientific">Proteus mirabilis (strain HI4320)</name>
    <dbReference type="NCBI Taxonomy" id="529507"/>
    <lineage>
        <taxon>Bacteria</taxon>
        <taxon>Pseudomonadati</taxon>
        <taxon>Pseudomonadota</taxon>
        <taxon>Gammaproteobacteria</taxon>
        <taxon>Enterobacterales</taxon>
        <taxon>Morganellaceae</taxon>
        <taxon>Proteus</taxon>
    </lineage>
</organism>